<organism>
    <name type="scientific">Galdieria sulphuraria</name>
    <name type="common">Red alga</name>
    <dbReference type="NCBI Taxonomy" id="130081"/>
    <lineage>
        <taxon>Eukaryota</taxon>
        <taxon>Rhodophyta</taxon>
        <taxon>Bangiophyceae</taxon>
        <taxon>Galdieriales</taxon>
        <taxon>Galdieriaceae</taxon>
        <taxon>Galdieria</taxon>
    </lineage>
</organism>
<comment type="function">
    <text evidence="1">Photosystem II (PSII) is a light-driven water:plastoquinone oxidoreductase that uses light energy to abstract electrons from H(2)O, generating O(2) and a proton gradient subsequently used for ATP formation. It consists of a core antenna complex that captures photons, and an electron transfer chain that converts photonic excitation into a charge separation. The D1/D2 (PsbA/PsbD) reaction center heterodimer binds P680, the primary electron donor of PSII as well as several subsequent electron acceptors.</text>
</comment>
<comment type="catalytic activity">
    <reaction evidence="1">
        <text>2 a plastoquinone + 4 hnu + 2 H2O = 2 a plastoquinol + O2</text>
        <dbReference type="Rhea" id="RHEA:36359"/>
        <dbReference type="Rhea" id="RHEA-COMP:9561"/>
        <dbReference type="Rhea" id="RHEA-COMP:9562"/>
        <dbReference type="ChEBI" id="CHEBI:15377"/>
        <dbReference type="ChEBI" id="CHEBI:15379"/>
        <dbReference type="ChEBI" id="CHEBI:17757"/>
        <dbReference type="ChEBI" id="CHEBI:30212"/>
        <dbReference type="ChEBI" id="CHEBI:62192"/>
        <dbReference type="EC" id="1.10.3.9"/>
    </reaction>
</comment>
<comment type="cofactor">
    <text evidence="1">The D1/D2 heterodimer binds P680, chlorophylls that are the primary electron donor of PSII, and subsequent electron acceptors. It shares a non-heme iron and each subunit binds pheophytin, quinone, additional chlorophylls, carotenoids and lipids. D1 provides most of the ligands for the Mn4-Ca-O5 cluster of the oxygen-evolving complex (OEC). There is also a Cl(-1) ion associated with D1 and D2, which is required for oxygen evolution. The PSII complex binds additional chlorophylls, carotenoids and specific lipids.</text>
</comment>
<comment type="subunit">
    <text evidence="2">PSII is composed of 1 copy each of membrane proteins PsbA, PsbB, PsbC, PsbD, PsbE, PsbF, PsbH, PsbI, PsbJ, PsbK, PsbL, PsbM, PsbT, PsbY, PsbZ, Psb30/Ycf12, at least 3 peripheral proteins of the oxygen-evolving complex and a large number of cofactors. It forms dimeric complexes.</text>
</comment>
<comment type="subcellular location">
    <subcellularLocation>
        <location evidence="1">Plastid</location>
        <location evidence="1">Chloroplast thylakoid membrane</location>
        <topology evidence="1">Multi-pass membrane protein</topology>
    </subcellularLocation>
</comment>
<comment type="PTM">
    <text evidence="1">Tyr-161 forms a radical intermediate that is referred to as redox-active TyrZ, YZ or Y-Z.</text>
</comment>
<comment type="PTM">
    <text evidence="1">C-terminally processed by CTPA; processing is essential to allow assembly of the oxygen-evolving complex and thus photosynthetic growth.</text>
</comment>
<comment type="miscellaneous">
    <text evidence="1">2 of the reaction center chlorophylls (ChlD1 and ChlD2) are entirely coordinated by water.</text>
</comment>
<comment type="miscellaneous">
    <text evidence="1">Herbicides such as atrazine, BNT, diuron or ioxynil bind in the Q(B) binding site and block subsequent electron transfer.</text>
</comment>
<comment type="similarity">
    <text evidence="1">Belongs to the reaction center PufL/M/PsbA/D family.</text>
</comment>
<gene>
    <name evidence="1" type="primary">psbA</name>
</gene>
<reference key="1">
    <citation type="journal article" date="1990" name="Curr. Genet.">
        <title>The psbA-gene from a red alga resembles those from cyanobacteria and cyanelles.</title>
        <authorList>
            <person name="Maid U."/>
            <person name="Valentin K.-U."/>
            <person name="Zetsche K."/>
        </authorList>
    </citation>
    <scope>NUCLEOTIDE SEQUENCE [GENOMIC DNA]</scope>
    <source>
        <strain>14-1-1 / Isolate 107.79/Goettingen</strain>
    </source>
</reference>
<sequence length="360" mass="39946">MTATLERRQTASLWERFCSWITSTENRLYIGWFGVLMIPTLLTATSVFIIGFIAAPPVDIDGIREPGFRSLLYGNNIITGAIVPTSNAIGIHFYPIWEAASLDEWLYNGGPYELIVLHFFIGICAYMGREWELSYRLGMRPWIAVAFSAPVAAATAVFIIYPIGQGSFSDGMPLGISGTFNFMLVFQAEHNILMHPFHMMGVAGVFGGSLFSAMHGSLVTSSLIRERTENESANNGYKFGQEYETYNIVAAHGYFGRLIFQYASFNNSRSLHFFLALWPVVCICVTALGVSTMAFNLNGFNFNQSVVDSQGRVINTWADILNRANLGIEVMHERNAHNFPLDLASEVSLPVALNKVEING</sequence>
<proteinExistence type="inferred from homology"/>
<accession>P24725</accession>
<evidence type="ECO:0000255" key="1">
    <source>
        <dbReference type="HAMAP-Rule" id="MF_01379"/>
    </source>
</evidence>
<evidence type="ECO:0000305" key="2"/>
<feature type="chain" id="PRO_0000090441" description="Photosystem II protein D1" evidence="1">
    <location>
        <begin position="1"/>
        <end position="344"/>
    </location>
</feature>
<feature type="propeptide" id="PRO_0000316509" evidence="1">
    <location>
        <begin position="345"/>
        <end position="360"/>
    </location>
</feature>
<feature type="transmembrane region" description="Helical" evidence="1">
    <location>
        <begin position="29"/>
        <end position="46"/>
    </location>
</feature>
<feature type="transmembrane region" description="Helical" evidence="1">
    <location>
        <begin position="118"/>
        <end position="133"/>
    </location>
</feature>
<feature type="transmembrane region" description="Helical" evidence="1">
    <location>
        <begin position="142"/>
        <end position="156"/>
    </location>
</feature>
<feature type="transmembrane region" description="Helical" evidence="1">
    <location>
        <begin position="197"/>
        <end position="218"/>
    </location>
</feature>
<feature type="transmembrane region" description="Helical" evidence="1">
    <location>
        <begin position="274"/>
        <end position="288"/>
    </location>
</feature>
<feature type="binding site" description="axial binding residue" evidence="1">
    <location>
        <position position="118"/>
    </location>
    <ligand>
        <name>chlorophyll a</name>
        <dbReference type="ChEBI" id="CHEBI:58416"/>
        <label>ChlzD1</label>
    </ligand>
    <ligandPart>
        <name>Mg</name>
        <dbReference type="ChEBI" id="CHEBI:25107"/>
    </ligandPart>
</feature>
<feature type="binding site" evidence="1">
    <location>
        <position position="126"/>
    </location>
    <ligand>
        <name>pheophytin a</name>
        <dbReference type="ChEBI" id="CHEBI:136840"/>
        <label>D1</label>
    </ligand>
</feature>
<feature type="binding site" evidence="1">
    <location>
        <position position="170"/>
    </location>
    <ligand>
        <name>[CaMn4O5] cluster</name>
        <dbReference type="ChEBI" id="CHEBI:189552"/>
    </ligand>
</feature>
<feature type="binding site" evidence="1">
    <location>
        <position position="189"/>
    </location>
    <ligand>
        <name>[CaMn4O5] cluster</name>
        <dbReference type="ChEBI" id="CHEBI:189552"/>
    </ligand>
</feature>
<feature type="binding site" description="axial binding residue" evidence="1">
    <location>
        <position position="198"/>
    </location>
    <ligand>
        <name>chlorophyll a</name>
        <dbReference type="ChEBI" id="CHEBI:58416"/>
        <label>PD1</label>
    </ligand>
    <ligandPart>
        <name>Mg</name>
        <dbReference type="ChEBI" id="CHEBI:25107"/>
    </ligandPart>
</feature>
<feature type="binding site" evidence="1">
    <location>
        <position position="215"/>
    </location>
    <ligand>
        <name>a quinone</name>
        <dbReference type="ChEBI" id="CHEBI:132124"/>
        <label>B</label>
    </ligand>
</feature>
<feature type="binding site" evidence="1">
    <location>
        <position position="215"/>
    </location>
    <ligand>
        <name>Fe cation</name>
        <dbReference type="ChEBI" id="CHEBI:24875"/>
        <note>ligand shared with heterodimeric partner</note>
    </ligand>
</feature>
<feature type="binding site" evidence="1">
    <location>
        <begin position="264"/>
        <end position="265"/>
    </location>
    <ligand>
        <name>a quinone</name>
        <dbReference type="ChEBI" id="CHEBI:132124"/>
        <label>B</label>
    </ligand>
</feature>
<feature type="binding site" evidence="1">
    <location>
        <position position="272"/>
    </location>
    <ligand>
        <name>Fe cation</name>
        <dbReference type="ChEBI" id="CHEBI:24875"/>
        <note>ligand shared with heterodimeric partner</note>
    </ligand>
</feature>
<feature type="binding site" evidence="1">
    <location>
        <position position="332"/>
    </location>
    <ligand>
        <name>[CaMn4O5] cluster</name>
        <dbReference type="ChEBI" id="CHEBI:189552"/>
    </ligand>
</feature>
<feature type="binding site" evidence="1">
    <location>
        <position position="333"/>
    </location>
    <ligand>
        <name>[CaMn4O5] cluster</name>
        <dbReference type="ChEBI" id="CHEBI:189552"/>
    </ligand>
</feature>
<feature type="binding site" evidence="1">
    <location>
        <position position="342"/>
    </location>
    <ligand>
        <name>[CaMn4O5] cluster</name>
        <dbReference type="ChEBI" id="CHEBI:189552"/>
    </ligand>
</feature>
<feature type="binding site" evidence="1">
    <location>
        <position position="344"/>
    </location>
    <ligand>
        <name>[CaMn4O5] cluster</name>
        <dbReference type="ChEBI" id="CHEBI:189552"/>
    </ligand>
</feature>
<feature type="site" description="Tyrosine radical intermediate" evidence="1">
    <location>
        <position position="161"/>
    </location>
</feature>
<feature type="site" description="Stabilizes free radical intermediate" evidence="1">
    <location>
        <position position="190"/>
    </location>
</feature>
<feature type="site" description="Cleavage; by CTPA" evidence="1">
    <location>
        <begin position="344"/>
        <end position="345"/>
    </location>
</feature>
<name>PSBA_GALSU</name>
<geneLocation type="chloroplast"/>
<keyword id="KW-0106">Calcium</keyword>
<keyword id="KW-0148">Chlorophyll</keyword>
<keyword id="KW-0150">Chloroplast</keyword>
<keyword id="KW-0157">Chromophore</keyword>
<keyword id="KW-0249">Electron transport</keyword>
<keyword id="KW-0359">Herbicide resistance</keyword>
<keyword id="KW-0408">Iron</keyword>
<keyword id="KW-0460">Magnesium</keyword>
<keyword id="KW-0464">Manganese</keyword>
<keyword id="KW-0472">Membrane</keyword>
<keyword id="KW-0479">Metal-binding</keyword>
<keyword id="KW-0560">Oxidoreductase</keyword>
<keyword id="KW-0602">Photosynthesis</keyword>
<keyword id="KW-0604">Photosystem II</keyword>
<keyword id="KW-0934">Plastid</keyword>
<keyword id="KW-0793">Thylakoid</keyword>
<keyword id="KW-0812">Transmembrane</keyword>
<keyword id="KW-1133">Transmembrane helix</keyword>
<keyword id="KW-0813">Transport</keyword>
<protein>
    <recommendedName>
        <fullName evidence="1">Photosystem II protein D1</fullName>
        <shortName evidence="1">PSII D1 protein</shortName>
        <ecNumber evidence="1">1.10.3.9</ecNumber>
    </recommendedName>
    <alternativeName>
        <fullName evidence="1">Photosystem II Q(B) protein</fullName>
    </alternativeName>
</protein>
<dbReference type="EC" id="1.10.3.9" evidence="1"/>
<dbReference type="EMBL" id="X52758">
    <property type="protein sequence ID" value="CAA36969.1"/>
    <property type="molecule type" value="Genomic_DNA"/>
</dbReference>
<dbReference type="SMR" id="P24725"/>
<dbReference type="eggNOG" id="ENOG502QR09">
    <property type="taxonomic scope" value="Eukaryota"/>
</dbReference>
<dbReference type="GO" id="GO:0009535">
    <property type="term" value="C:chloroplast thylakoid membrane"/>
    <property type="evidence" value="ECO:0007669"/>
    <property type="project" value="UniProtKB-SubCell"/>
</dbReference>
<dbReference type="GO" id="GO:0009523">
    <property type="term" value="C:photosystem II"/>
    <property type="evidence" value="ECO:0007669"/>
    <property type="project" value="UniProtKB-KW"/>
</dbReference>
<dbReference type="GO" id="GO:0016168">
    <property type="term" value="F:chlorophyll binding"/>
    <property type="evidence" value="ECO:0007669"/>
    <property type="project" value="UniProtKB-UniRule"/>
</dbReference>
<dbReference type="GO" id="GO:0045156">
    <property type="term" value="F:electron transporter, transferring electrons within the cyclic electron transport pathway of photosynthesis activity"/>
    <property type="evidence" value="ECO:0007669"/>
    <property type="project" value="InterPro"/>
</dbReference>
<dbReference type="GO" id="GO:0005506">
    <property type="term" value="F:iron ion binding"/>
    <property type="evidence" value="ECO:0007669"/>
    <property type="project" value="UniProtKB-UniRule"/>
</dbReference>
<dbReference type="GO" id="GO:0016682">
    <property type="term" value="F:oxidoreductase activity, acting on diphenols and related substances as donors, oxygen as acceptor"/>
    <property type="evidence" value="ECO:0007669"/>
    <property type="project" value="UniProtKB-UniRule"/>
</dbReference>
<dbReference type="GO" id="GO:0009772">
    <property type="term" value="P:photosynthetic electron transport in photosystem II"/>
    <property type="evidence" value="ECO:0007669"/>
    <property type="project" value="InterPro"/>
</dbReference>
<dbReference type="GO" id="GO:0009635">
    <property type="term" value="P:response to herbicide"/>
    <property type="evidence" value="ECO:0007669"/>
    <property type="project" value="UniProtKB-KW"/>
</dbReference>
<dbReference type="CDD" id="cd09289">
    <property type="entry name" value="Photosystem-II_D1"/>
    <property type="match status" value="1"/>
</dbReference>
<dbReference type="FunFam" id="1.20.85.10:FF:000002">
    <property type="entry name" value="Photosystem II protein D1"/>
    <property type="match status" value="1"/>
</dbReference>
<dbReference type="Gene3D" id="1.20.85.10">
    <property type="entry name" value="Photosystem II protein D1-like"/>
    <property type="match status" value="1"/>
</dbReference>
<dbReference type="HAMAP" id="MF_01379">
    <property type="entry name" value="PSII_PsbA_D1"/>
    <property type="match status" value="1"/>
</dbReference>
<dbReference type="InterPro" id="IPR055266">
    <property type="entry name" value="D1/D2"/>
</dbReference>
<dbReference type="InterPro" id="IPR036854">
    <property type="entry name" value="Photo_II_D1/D2_sf"/>
</dbReference>
<dbReference type="InterPro" id="IPR000484">
    <property type="entry name" value="Photo_RC_L/M"/>
</dbReference>
<dbReference type="InterPro" id="IPR055265">
    <property type="entry name" value="Photo_RC_L/M_CS"/>
</dbReference>
<dbReference type="InterPro" id="IPR005867">
    <property type="entry name" value="PSII_D1"/>
</dbReference>
<dbReference type="NCBIfam" id="TIGR01151">
    <property type="entry name" value="psbA"/>
    <property type="match status" value="1"/>
</dbReference>
<dbReference type="PANTHER" id="PTHR33149:SF12">
    <property type="entry name" value="PHOTOSYSTEM II D2 PROTEIN"/>
    <property type="match status" value="1"/>
</dbReference>
<dbReference type="PANTHER" id="PTHR33149">
    <property type="entry name" value="PHOTOSYSTEM II PROTEIN D1"/>
    <property type="match status" value="1"/>
</dbReference>
<dbReference type="Pfam" id="PF00124">
    <property type="entry name" value="Photo_RC"/>
    <property type="match status" value="1"/>
</dbReference>
<dbReference type="PRINTS" id="PR00256">
    <property type="entry name" value="REACTNCENTRE"/>
</dbReference>
<dbReference type="SUPFAM" id="SSF81483">
    <property type="entry name" value="Bacterial photosystem II reaction centre, L and M subunits"/>
    <property type="match status" value="1"/>
</dbReference>
<dbReference type="PROSITE" id="PS00244">
    <property type="entry name" value="REACTION_CENTER"/>
    <property type="match status" value="1"/>
</dbReference>